<dbReference type="EMBL" id="CP000661">
    <property type="protein sequence ID" value="ABP69802.1"/>
    <property type="molecule type" value="Genomic_DNA"/>
</dbReference>
<dbReference type="SMR" id="A4WQY8"/>
<dbReference type="STRING" id="349102.Rsph17025_0899"/>
<dbReference type="KEGG" id="rsq:Rsph17025_0899"/>
<dbReference type="eggNOG" id="COG2332">
    <property type="taxonomic scope" value="Bacteria"/>
</dbReference>
<dbReference type="HOGENOM" id="CLU_079503_1_1_5"/>
<dbReference type="BioCyc" id="RSPH349102:G1G8M-922-MONOMER"/>
<dbReference type="GO" id="GO:0005886">
    <property type="term" value="C:plasma membrane"/>
    <property type="evidence" value="ECO:0007669"/>
    <property type="project" value="UniProtKB-SubCell"/>
</dbReference>
<dbReference type="GO" id="GO:0020037">
    <property type="term" value="F:heme binding"/>
    <property type="evidence" value="ECO:0007669"/>
    <property type="project" value="InterPro"/>
</dbReference>
<dbReference type="GO" id="GO:0046872">
    <property type="term" value="F:metal ion binding"/>
    <property type="evidence" value="ECO:0007669"/>
    <property type="project" value="UniProtKB-KW"/>
</dbReference>
<dbReference type="GO" id="GO:0017004">
    <property type="term" value="P:cytochrome complex assembly"/>
    <property type="evidence" value="ECO:0007669"/>
    <property type="project" value="UniProtKB-KW"/>
</dbReference>
<dbReference type="Gene3D" id="2.40.50.140">
    <property type="entry name" value="Nucleic acid-binding proteins"/>
    <property type="match status" value="1"/>
</dbReference>
<dbReference type="HAMAP" id="MF_01959">
    <property type="entry name" value="CcmE"/>
    <property type="match status" value="1"/>
</dbReference>
<dbReference type="InterPro" id="IPR004329">
    <property type="entry name" value="CcmE"/>
</dbReference>
<dbReference type="InterPro" id="IPR036127">
    <property type="entry name" value="CcmE-like_sf"/>
</dbReference>
<dbReference type="InterPro" id="IPR012340">
    <property type="entry name" value="NA-bd_OB-fold"/>
</dbReference>
<dbReference type="NCBIfam" id="NF009727">
    <property type="entry name" value="PRK13254.1-1"/>
    <property type="match status" value="1"/>
</dbReference>
<dbReference type="NCBIfam" id="NF009731">
    <property type="entry name" value="PRK13254.1-5"/>
    <property type="match status" value="1"/>
</dbReference>
<dbReference type="PANTHER" id="PTHR34128">
    <property type="entry name" value="CYTOCHROME C-TYPE BIOGENESIS PROTEIN CCME HOMOLOG, MITOCHONDRIAL"/>
    <property type="match status" value="1"/>
</dbReference>
<dbReference type="PANTHER" id="PTHR34128:SF2">
    <property type="entry name" value="CYTOCHROME C-TYPE BIOGENESIS PROTEIN CCME HOMOLOG, MITOCHONDRIAL"/>
    <property type="match status" value="1"/>
</dbReference>
<dbReference type="Pfam" id="PF03100">
    <property type="entry name" value="CcmE"/>
    <property type="match status" value="1"/>
</dbReference>
<dbReference type="SUPFAM" id="SSF82093">
    <property type="entry name" value="Heme chaperone CcmE"/>
    <property type="match status" value="1"/>
</dbReference>
<accession>A4WQY8</accession>
<proteinExistence type="inferred from homology"/>
<keyword id="KW-0997">Cell inner membrane</keyword>
<keyword id="KW-1003">Cell membrane</keyword>
<keyword id="KW-0201">Cytochrome c-type biogenesis</keyword>
<keyword id="KW-0349">Heme</keyword>
<keyword id="KW-0408">Iron</keyword>
<keyword id="KW-0472">Membrane</keyword>
<keyword id="KW-0479">Metal-binding</keyword>
<keyword id="KW-0735">Signal-anchor</keyword>
<keyword id="KW-0812">Transmembrane</keyword>
<keyword id="KW-1133">Transmembrane helix</keyword>
<feature type="chain" id="PRO_1000070842" description="Cytochrome c-type biogenesis protein CcmE">
    <location>
        <begin position="1"/>
        <end position="151"/>
    </location>
</feature>
<feature type="topological domain" description="Cytoplasmic" evidence="1">
    <location>
        <begin position="1"/>
        <end position="9"/>
    </location>
</feature>
<feature type="transmembrane region" description="Helical; Signal-anchor for type II membrane protein" evidence="1">
    <location>
        <begin position="10"/>
        <end position="30"/>
    </location>
</feature>
<feature type="topological domain" description="Periplasmic" evidence="1">
    <location>
        <begin position="31"/>
        <end position="151"/>
    </location>
</feature>
<feature type="binding site" description="covalent" evidence="1">
    <location>
        <position position="123"/>
    </location>
    <ligand>
        <name>heme</name>
        <dbReference type="ChEBI" id="CHEBI:30413"/>
    </ligand>
</feature>
<feature type="binding site" description="axial binding residue" evidence="1">
    <location>
        <position position="127"/>
    </location>
    <ligand>
        <name>heme</name>
        <dbReference type="ChEBI" id="CHEBI:30413"/>
    </ligand>
    <ligandPart>
        <name>Fe</name>
        <dbReference type="ChEBI" id="CHEBI:18248"/>
    </ligandPart>
</feature>
<gene>
    <name evidence="1" type="primary">ccmE</name>
    <name evidence="1" type="synonym">cycJ</name>
    <name type="ordered locus">Rsph17025_0899</name>
</gene>
<name>CCME_CERS5</name>
<comment type="function">
    <text evidence="1">Heme chaperone required for the biogenesis of c-type cytochromes. Transiently binds heme delivered by CcmC and transfers the heme to apo-cytochromes in a process facilitated by CcmF and CcmH.</text>
</comment>
<comment type="subcellular location">
    <subcellularLocation>
        <location evidence="1">Cell inner membrane</location>
        <topology evidence="1">Single-pass type II membrane protein</topology>
        <orientation evidence="1">Periplasmic side</orientation>
    </subcellularLocation>
</comment>
<comment type="similarity">
    <text evidence="1">Belongs to the CcmE/CycJ family.</text>
</comment>
<protein>
    <recommendedName>
        <fullName evidence="1">Cytochrome c-type biogenesis protein CcmE</fullName>
    </recommendedName>
    <alternativeName>
        <fullName evidence="1">Cytochrome c maturation protein E</fullName>
    </alternativeName>
    <alternativeName>
        <fullName evidence="1">Heme chaperone CcmE</fullName>
    </alternativeName>
</protein>
<evidence type="ECO:0000255" key="1">
    <source>
        <dbReference type="HAMAP-Rule" id="MF_01959"/>
    </source>
</evidence>
<sequence length="151" mass="16411">MKGLKKKRRIQIITLAFVALAGSTALIGYAMRDGINFFRSPTQVVEAPPSETEVFRIGGLVEKGSLVRGQGETVTFRVTDTNATVPVRFTGVLPDLFAEDAGMVGTGRLVDGVFQASEILAKHDETYMPKEVVDALKEQGVFQHTEDQPQG</sequence>
<organism>
    <name type="scientific">Cereibacter sphaeroides (strain ATCC 17025 / ATH 2.4.3)</name>
    <name type="common">Rhodobacter sphaeroides</name>
    <dbReference type="NCBI Taxonomy" id="349102"/>
    <lineage>
        <taxon>Bacteria</taxon>
        <taxon>Pseudomonadati</taxon>
        <taxon>Pseudomonadota</taxon>
        <taxon>Alphaproteobacteria</taxon>
        <taxon>Rhodobacterales</taxon>
        <taxon>Paracoccaceae</taxon>
        <taxon>Cereibacter</taxon>
    </lineage>
</organism>
<reference key="1">
    <citation type="submission" date="2007-04" db="EMBL/GenBank/DDBJ databases">
        <title>Complete sequence of chromosome of Rhodobacter sphaeroides ATCC 17025.</title>
        <authorList>
            <consortium name="US DOE Joint Genome Institute"/>
            <person name="Copeland A."/>
            <person name="Lucas S."/>
            <person name="Lapidus A."/>
            <person name="Barry K."/>
            <person name="Detter J.C."/>
            <person name="Glavina del Rio T."/>
            <person name="Hammon N."/>
            <person name="Israni S."/>
            <person name="Dalin E."/>
            <person name="Tice H."/>
            <person name="Pitluck S."/>
            <person name="Chertkov O."/>
            <person name="Brettin T."/>
            <person name="Bruce D."/>
            <person name="Han C."/>
            <person name="Schmutz J."/>
            <person name="Larimer F."/>
            <person name="Land M."/>
            <person name="Hauser L."/>
            <person name="Kyrpides N."/>
            <person name="Kim E."/>
            <person name="Richardson P."/>
            <person name="Mackenzie C."/>
            <person name="Choudhary M."/>
            <person name="Donohue T.J."/>
            <person name="Kaplan S."/>
        </authorList>
    </citation>
    <scope>NUCLEOTIDE SEQUENCE [LARGE SCALE GENOMIC DNA]</scope>
    <source>
        <strain>ATCC 17025 / ATH 2.4.3</strain>
    </source>
</reference>